<evidence type="ECO:0000255" key="1">
    <source>
        <dbReference type="HAMAP-Rule" id="MF_01588"/>
    </source>
</evidence>
<reference key="1">
    <citation type="journal article" date="2004" name="Nat. Biotechnol.">
        <title>Complete sequence and comparative genome analysis of the dairy bacterium Streptococcus thermophilus.</title>
        <authorList>
            <person name="Bolotin A."/>
            <person name="Quinquis B."/>
            <person name="Renault P."/>
            <person name="Sorokin A."/>
            <person name="Ehrlich S.D."/>
            <person name="Kulakauskas S."/>
            <person name="Lapidus A."/>
            <person name="Goltsman E."/>
            <person name="Mazur M."/>
            <person name="Pusch G.D."/>
            <person name="Fonstein M."/>
            <person name="Overbeek R."/>
            <person name="Kyprides N."/>
            <person name="Purnelle B."/>
            <person name="Prozzi D."/>
            <person name="Ngui K."/>
            <person name="Masuy D."/>
            <person name="Hancy F."/>
            <person name="Burteau S."/>
            <person name="Boutry M."/>
            <person name="Delcour J."/>
            <person name="Goffeau A."/>
            <person name="Hols P."/>
        </authorList>
    </citation>
    <scope>NUCLEOTIDE SEQUENCE [LARGE SCALE GENOMIC DNA]</scope>
    <source>
        <strain>ATCC BAA-250 / LMG 18311</strain>
    </source>
</reference>
<name>DNLJ_STRT2</name>
<organism>
    <name type="scientific">Streptococcus thermophilus (strain ATCC BAA-250 / LMG 18311)</name>
    <dbReference type="NCBI Taxonomy" id="264199"/>
    <lineage>
        <taxon>Bacteria</taxon>
        <taxon>Bacillati</taxon>
        <taxon>Bacillota</taxon>
        <taxon>Bacilli</taxon>
        <taxon>Lactobacillales</taxon>
        <taxon>Streptococcaceae</taxon>
        <taxon>Streptococcus</taxon>
    </lineage>
</organism>
<comment type="function">
    <text evidence="1">DNA ligase that catalyzes the formation of phosphodiester linkages between 5'-phosphoryl and 3'-hydroxyl groups in double-stranded DNA using NAD as a coenzyme and as the energy source for the reaction. It is essential for DNA replication and repair of damaged DNA.</text>
</comment>
<comment type="catalytic activity">
    <reaction evidence="1">
        <text>NAD(+) + (deoxyribonucleotide)n-3'-hydroxyl + 5'-phospho-(deoxyribonucleotide)m = (deoxyribonucleotide)n+m + AMP + beta-nicotinamide D-nucleotide.</text>
        <dbReference type="EC" id="6.5.1.2"/>
    </reaction>
</comment>
<comment type="cofactor">
    <cofactor evidence="1">
        <name>Mg(2+)</name>
        <dbReference type="ChEBI" id="CHEBI:18420"/>
    </cofactor>
    <cofactor evidence="1">
        <name>Mn(2+)</name>
        <dbReference type="ChEBI" id="CHEBI:29035"/>
    </cofactor>
</comment>
<comment type="similarity">
    <text evidence="1">Belongs to the NAD-dependent DNA ligase family. LigA subfamily.</text>
</comment>
<sequence length="652" mass="71944">MEKRMKELVDKLNQYAKEYYTEDNPSVSDAEYDKLYRELVTLEAEHPELVQADSPTHRVGGLVLDGFEKYQHEYPLYSLQDAFSREELDAFDKRVKSEFPNADYMAELKIDGLSISLTYVDGILQVGATRGDGSVGENITENVKRISDIPLKLDQPLNITVRGECYLPRAEFERINTQRQENGEAEFANPRNAAAGTLRQLDTKVVAERRLATFFYQEASPTERLTQNDVLNEVAELGFSVNPRRIVTSSMDEIWDFIQAVGQDRDHLAYDIDGVVIKVNSLAIQEELGFTVKAPRWAIAYKFPAEEKEAKLLSVDWQVGRTGVVTPTANLTPVQLAGTTVSRATLHNVDYITEKDIRIGDTVIVYKAGDIIPAVLRVVESKRTTQEAMPVPSQCPSCGSGLLHFEDEVALRCINPSCPAQIKEGLIHFASRDAMNISGMGPSVVEKLFKAELVKEVADIYGLNSQDFLQLEGFKEKSAEKLYAAIQASKENSAEKLLYGLGIRHVGAKVSKQLLESFGTIKELASADVQAIAAVDGLGEVIAKSIQRYFAKEEAQVLLKELESYGVNLSYLGQKVADDAILSGKTVVLTGKLEHLKRSEAKAKLEALGAKVTGSVSKKTDLVVAGSDAGSKLEKAQSLGIEVKDEAWLLDL</sequence>
<keyword id="KW-0227">DNA damage</keyword>
<keyword id="KW-0234">DNA repair</keyword>
<keyword id="KW-0235">DNA replication</keyword>
<keyword id="KW-0436">Ligase</keyword>
<keyword id="KW-0460">Magnesium</keyword>
<keyword id="KW-0464">Manganese</keyword>
<keyword id="KW-0479">Metal-binding</keyword>
<keyword id="KW-0520">NAD</keyword>
<keyword id="KW-1185">Reference proteome</keyword>
<keyword id="KW-0862">Zinc</keyword>
<protein>
    <recommendedName>
        <fullName evidence="1">DNA ligase</fullName>
        <ecNumber evidence="1">6.5.1.2</ecNumber>
    </recommendedName>
    <alternativeName>
        <fullName evidence="1">Polydeoxyribonucleotide synthase [NAD(+)]</fullName>
    </alternativeName>
</protein>
<proteinExistence type="inferred from homology"/>
<accession>Q5M382</accession>
<dbReference type="EC" id="6.5.1.2" evidence="1"/>
<dbReference type="EMBL" id="CP000023">
    <property type="protein sequence ID" value="AAV61157.1"/>
    <property type="molecule type" value="Genomic_DNA"/>
</dbReference>
<dbReference type="RefSeq" id="WP_011226393.1">
    <property type="nucleotide sequence ID" value="NC_006448.1"/>
</dbReference>
<dbReference type="SMR" id="Q5M382"/>
<dbReference type="STRING" id="264199.stu1554"/>
<dbReference type="GeneID" id="66899301"/>
<dbReference type="KEGG" id="stl:stu1554"/>
<dbReference type="PATRIC" id="fig|264199.4.peg.1525"/>
<dbReference type="eggNOG" id="COG0272">
    <property type="taxonomic scope" value="Bacteria"/>
</dbReference>
<dbReference type="HOGENOM" id="CLU_007764_2_1_9"/>
<dbReference type="Proteomes" id="UP000001170">
    <property type="component" value="Chromosome"/>
</dbReference>
<dbReference type="GO" id="GO:0005829">
    <property type="term" value="C:cytosol"/>
    <property type="evidence" value="ECO:0007669"/>
    <property type="project" value="TreeGrafter"/>
</dbReference>
<dbReference type="GO" id="GO:0003677">
    <property type="term" value="F:DNA binding"/>
    <property type="evidence" value="ECO:0007669"/>
    <property type="project" value="InterPro"/>
</dbReference>
<dbReference type="GO" id="GO:0003911">
    <property type="term" value="F:DNA ligase (NAD+) activity"/>
    <property type="evidence" value="ECO:0007669"/>
    <property type="project" value="UniProtKB-UniRule"/>
</dbReference>
<dbReference type="GO" id="GO:0046872">
    <property type="term" value="F:metal ion binding"/>
    <property type="evidence" value="ECO:0007669"/>
    <property type="project" value="UniProtKB-KW"/>
</dbReference>
<dbReference type="GO" id="GO:0006281">
    <property type="term" value="P:DNA repair"/>
    <property type="evidence" value="ECO:0007669"/>
    <property type="project" value="UniProtKB-KW"/>
</dbReference>
<dbReference type="GO" id="GO:0006260">
    <property type="term" value="P:DNA replication"/>
    <property type="evidence" value="ECO:0007669"/>
    <property type="project" value="UniProtKB-KW"/>
</dbReference>
<dbReference type="CDD" id="cd17748">
    <property type="entry name" value="BRCT_DNA_ligase_like"/>
    <property type="match status" value="1"/>
</dbReference>
<dbReference type="CDD" id="cd00114">
    <property type="entry name" value="LIGANc"/>
    <property type="match status" value="1"/>
</dbReference>
<dbReference type="FunFam" id="1.10.150.20:FF:000006">
    <property type="entry name" value="DNA ligase"/>
    <property type="match status" value="1"/>
</dbReference>
<dbReference type="FunFam" id="1.10.150.20:FF:000007">
    <property type="entry name" value="DNA ligase"/>
    <property type="match status" value="1"/>
</dbReference>
<dbReference type="FunFam" id="1.10.287.610:FF:000002">
    <property type="entry name" value="DNA ligase"/>
    <property type="match status" value="1"/>
</dbReference>
<dbReference type="FunFam" id="2.40.50.140:FF:000012">
    <property type="entry name" value="DNA ligase"/>
    <property type="match status" value="1"/>
</dbReference>
<dbReference type="FunFam" id="3.30.470.30:FF:000001">
    <property type="entry name" value="DNA ligase"/>
    <property type="match status" value="1"/>
</dbReference>
<dbReference type="Gene3D" id="6.20.10.30">
    <property type="match status" value="1"/>
</dbReference>
<dbReference type="Gene3D" id="1.10.150.20">
    <property type="entry name" value="5' to 3' exonuclease, C-terminal subdomain"/>
    <property type="match status" value="2"/>
</dbReference>
<dbReference type="Gene3D" id="3.40.50.10190">
    <property type="entry name" value="BRCT domain"/>
    <property type="match status" value="1"/>
</dbReference>
<dbReference type="Gene3D" id="3.30.470.30">
    <property type="entry name" value="DNA ligase/mRNA capping enzyme"/>
    <property type="match status" value="1"/>
</dbReference>
<dbReference type="Gene3D" id="1.10.287.610">
    <property type="entry name" value="Helix hairpin bin"/>
    <property type="match status" value="1"/>
</dbReference>
<dbReference type="Gene3D" id="2.40.50.140">
    <property type="entry name" value="Nucleic acid-binding proteins"/>
    <property type="match status" value="1"/>
</dbReference>
<dbReference type="HAMAP" id="MF_01588">
    <property type="entry name" value="DNA_ligase_A"/>
    <property type="match status" value="1"/>
</dbReference>
<dbReference type="InterPro" id="IPR001357">
    <property type="entry name" value="BRCT_dom"/>
</dbReference>
<dbReference type="InterPro" id="IPR036420">
    <property type="entry name" value="BRCT_dom_sf"/>
</dbReference>
<dbReference type="InterPro" id="IPR041663">
    <property type="entry name" value="DisA/LigA_HHH"/>
</dbReference>
<dbReference type="InterPro" id="IPR001679">
    <property type="entry name" value="DNA_ligase"/>
</dbReference>
<dbReference type="InterPro" id="IPR018239">
    <property type="entry name" value="DNA_ligase_AS"/>
</dbReference>
<dbReference type="InterPro" id="IPR033136">
    <property type="entry name" value="DNA_ligase_CS"/>
</dbReference>
<dbReference type="InterPro" id="IPR013839">
    <property type="entry name" value="DNAligase_adenylation"/>
</dbReference>
<dbReference type="InterPro" id="IPR013840">
    <property type="entry name" value="DNAligase_N"/>
</dbReference>
<dbReference type="InterPro" id="IPR003583">
    <property type="entry name" value="Hlx-hairpin-Hlx_DNA-bd_motif"/>
</dbReference>
<dbReference type="InterPro" id="IPR012340">
    <property type="entry name" value="NA-bd_OB-fold"/>
</dbReference>
<dbReference type="InterPro" id="IPR004150">
    <property type="entry name" value="NAD_DNA_ligase_OB"/>
</dbReference>
<dbReference type="InterPro" id="IPR010994">
    <property type="entry name" value="RuvA_2-like"/>
</dbReference>
<dbReference type="InterPro" id="IPR004149">
    <property type="entry name" value="Znf_DNAligase_C4"/>
</dbReference>
<dbReference type="NCBIfam" id="TIGR00575">
    <property type="entry name" value="dnlj"/>
    <property type="match status" value="1"/>
</dbReference>
<dbReference type="NCBIfam" id="NF005932">
    <property type="entry name" value="PRK07956.1"/>
    <property type="match status" value="1"/>
</dbReference>
<dbReference type="PANTHER" id="PTHR23389">
    <property type="entry name" value="CHROMOSOME TRANSMISSION FIDELITY FACTOR 18"/>
    <property type="match status" value="1"/>
</dbReference>
<dbReference type="PANTHER" id="PTHR23389:SF9">
    <property type="entry name" value="DNA LIGASE"/>
    <property type="match status" value="1"/>
</dbReference>
<dbReference type="Pfam" id="PF00533">
    <property type="entry name" value="BRCT"/>
    <property type="match status" value="1"/>
</dbReference>
<dbReference type="Pfam" id="PF01653">
    <property type="entry name" value="DNA_ligase_aden"/>
    <property type="match status" value="1"/>
</dbReference>
<dbReference type="Pfam" id="PF03120">
    <property type="entry name" value="DNA_ligase_OB"/>
    <property type="match status" value="1"/>
</dbReference>
<dbReference type="Pfam" id="PF03119">
    <property type="entry name" value="DNA_ligase_ZBD"/>
    <property type="match status" value="1"/>
</dbReference>
<dbReference type="Pfam" id="PF12826">
    <property type="entry name" value="HHH_2"/>
    <property type="match status" value="1"/>
</dbReference>
<dbReference type="Pfam" id="PF14520">
    <property type="entry name" value="HHH_5"/>
    <property type="match status" value="1"/>
</dbReference>
<dbReference type="PIRSF" id="PIRSF001604">
    <property type="entry name" value="LigA"/>
    <property type="match status" value="1"/>
</dbReference>
<dbReference type="SMART" id="SM00292">
    <property type="entry name" value="BRCT"/>
    <property type="match status" value="1"/>
</dbReference>
<dbReference type="SMART" id="SM00278">
    <property type="entry name" value="HhH1"/>
    <property type="match status" value="3"/>
</dbReference>
<dbReference type="SMART" id="SM00532">
    <property type="entry name" value="LIGANc"/>
    <property type="match status" value="1"/>
</dbReference>
<dbReference type="SUPFAM" id="SSF52113">
    <property type="entry name" value="BRCT domain"/>
    <property type="match status" value="1"/>
</dbReference>
<dbReference type="SUPFAM" id="SSF56091">
    <property type="entry name" value="DNA ligase/mRNA capping enzyme, catalytic domain"/>
    <property type="match status" value="1"/>
</dbReference>
<dbReference type="SUPFAM" id="SSF50249">
    <property type="entry name" value="Nucleic acid-binding proteins"/>
    <property type="match status" value="1"/>
</dbReference>
<dbReference type="SUPFAM" id="SSF47781">
    <property type="entry name" value="RuvA domain 2-like"/>
    <property type="match status" value="1"/>
</dbReference>
<dbReference type="PROSITE" id="PS50172">
    <property type="entry name" value="BRCT"/>
    <property type="match status" value="1"/>
</dbReference>
<dbReference type="PROSITE" id="PS01055">
    <property type="entry name" value="DNA_LIGASE_N1"/>
    <property type="match status" value="1"/>
</dbReference>
<dbReference type="PROSITE" id="PS01056">
    <property type="entry name" value="DNA_LIGASE_N2"/>
    <property type="match status" value="1"/>
</dbReference>
<gene>
    <name evidence="1" type="primary">ligA</name>
    <name type="ordered locus">stu1554</name>
</gene>
<feature type="chain" id="PRO_0000313470" description="DNA ligase">
    <location>
        <begin position="1"/>
        <end position="652"/>
    </location>
</feature>
<feature type="domain" description="BRCT" evidence="1">
    <location>
        <begin position="577"/>
        <end position="652"/>
    </location>
</feature>
<feature type="active site" description="N6-AMP-lysine intermediate" evidence="1">
    <location>
        <position position="109"/>
    </location>
</feature>
<feature type="binding site" evidence="1">
    <location>
        <begin position="29"/>
        <end position="33"/>
    </location>
    <ligand>
        <name>NAD(+)</name>
        <dbReference type="ChEBI" id="CHEBI:57540"/>
    </ligand>
</feature>
<feature type="binding site" evidence="1">
    <location>
        <begin position="78"/>
        <end position="79"/>
    </location>
    <ligand>
        <name>NAD(+)</name>
        <dbReference type="ChEBI" id="CHEBI:57540"/>
    </ligand>
</feature>
<feature type="binding site" evidence="1">
    <location>
        <position position="107"/>
    </location>
    <ligand>
        <name>NAD(+)</name>
        <dbReference type="ChEBI" id="CHEBI:57540"/>
    </ligand>
</feature>
<feature type="binding site" evidence="1">
    <location>
        <position position="130"/>
    </location>
    <ligand>
        <name>NAD(+)</name>
        <dbReference type="ChEBI" id="CHEBI:57540"/>
    </ligand>
</feature>
<feature type="binding site" evidence="1">
    <location>
        <position position="164"/>
    </location>
    <ligand>
        <name>NAD(+)</name>
        <dbReference type="ChEBI" id="CHEBI:57540"/>
    </ligand>
</feature>
<feature type="binding site" evidence="1">
    <location>
        <position position="278"/>
    </location>
    <ligand>
        <name>NAD(+)</name>
        <dbReference type="ChEBI" id="CHEBI:57540"/>
    </ligand>
</feature>
<feature type="binding site" evidence="1">
    <location>
        <position position="302"/>
    </location>
    <ligand>
        <name>NAD(+)</name>
        <dbReference type="ChEBI" id="CHEBI:57540"/>
    </ligand>
</feature>
<feature type="binding site" evidence="1">
    <location>
        <position position="395"/>
    </location>
    <ligand>
        <name>Zn(2+)</name>
        <dbReference type="ChEBI" id="CHEBI:29105"/>
    </ligand>
</feature>
<feature type="binding site" evidence="1">
    <location>
        <position position="398"/>
    </location>
    <ligand>
        <name>Zn(2+)</name>
        <dbReference type="ChEBI" id="CHEBI:29105"/>
    </ligand>
</feature>
<feature type="binding site" evidence="1">
    <location>
        <position position="413"/>
    </location>
    <ligand>
        <name>Zn(2+)</name>
        <dbReference type="ChEBI" id="CHEBI:29105"/>
    </ligand>
</feature>
<feature type="binding site" evidence="1">
    <location>
        <position position="418"/>
    </location>
    <ligand>
        <name>Zn(2+)</name>
        <dbReference type="ChEBI" id="CHEBI:29105"/>
    </ligand>
</feature>